<dbReference type="EMBL" id="Z25751">
    <property type="protein sequence ID" value="CAA81028.1"/>
    <property type="molecule type" value="Genomic_DNA"/>
</dbReference>
<dbReference type="PIR" id="S39213">
    <property type="entry name" value="S39213"/>
</dbReference>
<dbReference type="Proteomes" id="UP000008265">
    <property type="component" value="Genome"/>
</dbReference>
<dbReference type="GO" id="GO:0016032">
    <property type="term" value="P:viral process"/>
    <property type="evidence" value="ECO:0007669"/>
    <property type="project" value="InterPro"/>
</dbReference>
<dbReference type="InterPro" id="IPR000657">
    <property type="entry name" value="Gemini_AL3"/>
</dbReference>
<dbReference type="Pfam" id="PF01407">
    <property type="entry name" value="Gemini_AL3"/>
    <property type="match status" value="1"/>
</dbReference>
<dbReference type="PRINTS" id="PR00231">
    <property type="entry name" value="GEMCOATAL3"/>
</dbReference>
<organismHost>
    <name type="scientific">Cynanchum acutum</name>
    <dbReference type="NCBI Taxonomy" id="185024"/>
</organismHost>
<organismHost>
    <name type="scientific">Solanum lycopersicum</name>
    <name type="common">Tomato</name>
    <name type="synonym">Lycopersicon esculentum</name>
    <dbReference type="NCBI Taxonomy" id="4081"/>
</organismHost>
<organismHost>
    <name type="scientific">Solanum nigrum</name>
    <name type="common">Black nightshade</name>
    <dbReference type="NCBI Taxonomy" id="4112"/>
</organismHost>
<gene>
    <name type="ORF">C3</name>
    <name type="ORF">L3</name>
</gene>
<accession>P38611</accession>
<reference key="1">
    <citation type="journal article" date="1994" name="Arch. Virol.">
        <title>High similarity among the tomato yellow leaf curl virus isolates from the west Mediterranean basin: the nucleotide sequence of an infectious clone from Spain.</title>
        <authorList>
            <person name="Noris E."/>
            <person name="Hidalgo E."/>
            <person name="Accotto G.P."/>
            <person name="Moriones E."/>
        </authorList>
    </citation>
    <scope>NUCLEOTIDE SEQUENCE [GENOMIC DNA]</scope>
</reference>
<evidence type="ECO:0000250" key="1"/>
<evidence type="ECO:0000305" key="2"/>
<comment type="function">
    <text evidence="1">Increases viral DNA accumulation. Enhances infectivity and symptom expression (By similarity).</text>
</comment>
<comment type="subunit">
    <text evidence="1">Homooligomer. Interacts with the replication-associated protein (REP). Interacts with host proliferating cell nuclear antigen (PCNA). Interacts with host retinoblastoma-related protein 1 (RBR1), and may thereby deregulate the host cell cycle. Oligomerization and interaction with PCNA are necessary for optimal replication enhancement (By similarity).</text>
</comment>
<comment type="similarity">
    <text evidence="2">Belongs to the geminiviridae replication enhancer protein family.</text>
</comment>
<name>REN_TYCS1</name>
<feature type="chain" id="PRO_0000222250" description="Replication enhancer protein">
    <location>
        <begin position="1"/>
        <end position="134"/>
    </location>
</feature>
<proteinExistence type="inferred from homology"/>
<keyword id="KW-0945">Host-virus interaction</keyword>
<protein>
    <recommendedName>
        <fullName>Replication enhancer protein</fullName>
        <shortName>REn</shortName>
    </recommendedName>
    <alternativeName>
        <fullName>Protein C3</fullName>
    </alternativeName>
    <alternativeName>
        <fullName>Protein L3</fullName>
    </alternativeName>
</protein>
<sequence length="134" mass="16066">MDLRTGEYITAHQATSGVYTFEITNPLYFTITRHNQQPFNSKYNFLTFQIRFNHNLRKALGIHKCFLNFRIWTTLQSPTGHFLRVFRYQVYKYLNNIGVISLNNVIRAVDYVLFDVFENTIDVIEQHEIKYNLY</sequence>
<organism>
    <name type="scientific">Tomato yellow leaf curl Sardinia virus (isolate Spain-1)</name>
    <name type="common">TYLCSV</name>
    <dbReference type="NCBI Taxonomy" id="37139"/>
    <lineage>
        <taxon>Viruses</taxon>
        <taxon>Monodnaviria</taxon>
        <taxon>Shotokuvirae</taxon>
        <taxon>Cressdnaviricota</taxon>
        <taxon>Repensiviricetes</taxon>
        <taxon>Geplafuvirales</taxon>
        <taxon>Geminiviridae</taxon>
        <taxon>Begomovirus</taxon>
        <taxon>Tomato yellow leaf curl virus</taxon>
    </lineage>
</organism>